<keyword id="KW-0472">Membrane</keyword>
<keyword id="KW-0496">Mitochondrion</keyword>
<keyword id="KW-0999">Mitochondrion inner membrane</keyword>
<keyword id="KW-1185">Reference proteome</keyword>
<keyword id="KW-0809">Transit peptide</keyword>
<reference key="1">
    <citation type="journal article" date="2009" name="Nature">
        <title>Evolution of pathogenicity and sexual reproduction in eight Candida genomes.</title>
        <authorList>
            <person name="Butler G."/>
            <person name="Rasmussen M.D."/>
            <person name="Lin M.F."/>
            <person name="Santos M.A.S."/>
            <person name="Sakthikumar S."/>
            <person name="Munro C.A."/>
            <person name="Rheinbay E."/>
            <person name="Grabherr M."/>
            <person name="Forche A."/>
            <person name="Reedy J.L."/>
            <person name="Agrafioti I."/>
            <person name="Arnaud M.B."/>
            <person name="Bates S."/>
            <person name="Brown A.J.P."/>
            <person name="Brunke S."/>
            <person name="Costanzo M.C."/>
            <person name="Fitzpatrick D.A."/>
            <person name="de Groot P.W.J."/>
            <person name="Harris D."/>
            <person name="Hoyer L.L."/>
            <person name="Hube B."/>
            <person name="Klis F.M."/>
            <person name="Kodira C."/>
            <person name="Lennard N."/>
            <person name="Logue M.E."/>
            <person name="Martin R."/>
            <person name="Neiman A.M."/>
            <person name="Nikolaou E."/>
            <person name="Quail M.A."/>
            <person name="Quinn J."/>
            <person name="Santos M.C."/>
            <person name="Schmitzberger F.F."/>
            <person name="Sherlock G."/>
            <person name="Shah P."/>
            <person name="Silverstein K.A.T."/>
            <person name="Skrzypek M.S."/>
            <person name="Soll D."/>
            <person name="Staggs R."/>
            <person name="Stansfield I."/>
            <person name="Stumpf M.P.H."/>
            <person name="Sudbery P.E."/>
            <person name="Srikantha T."/>
            <person name="Zeng Q."/>
            <person name="Berman J."/>
            <person name="Berriman M."/>
            <person name="Heitman J."/>
            <person name="Gow N.A.R."/>
            <person name="Lorenz M.C."/>
            <person name="Birren B.W."/>
            <person name="Kellis M."/>
            <person name="Cuomo C.A."/>
        </authorList>
    </citation>
    <scope>NUCLEOTIDE SEQUENCE [LARGE SCALE GENOMIC DNA]</scope>
    <source>
        <strain>ATCC 42720</strain>
    </source>
</reference>
<organism>
    <name type="scientific">Clavispora lusitaniae (strain ATCC 42720)</name>
    <name type="common">Yeast</name>
    <name type="synonym">Candida lusitaniae</name>
    <dbReference type="NCBI Taxonomy" id="306902"/>
    <lineage>
        <taxon>Eukaryota</taxon>
        <taxon>Fungi</taxon>
        <taxon>Dikarya</taxon>
        <taxon>Ascomycota</taxon>
        <taxon>Saccharomycotina</taxon>
        <taxon>Pichiomycetes</taxon>
        <taxon>Metschnikowiaceae</taxon>
        <taxon>Clavispora</taxon>
    </lineage>
</organism>
<proteinExistence type="inferred from homology"/>
<name>ATP25_CLAL4</name>
<feature type="transit peptide" description="Mitochondrion" evidence="2">
    <location>
        <begin position="1"/>
        <end position="35"/>
    </location>
</feature>
<feature type="chain" id="PRO_0000404468" description="ATPase synthesis protein 25, mitochondrial">
    <location>
        <begin position="36"/>
        <end position="600"/>
    </location>
</feature>
<accession>C4XVT2</accession>
<sequence>MLRLFRANPSSVKVWRPISTAVYSVRQNSSASKPISESRVSISEVEKDSKDEKEINEVSLPWYLRDDITSSLVEKKEILLPEIPPHAPPQVEEFLTLMACDYGMDNIMLFDMTQLPDDHEYKENNKDVDFIVVATGKSEKHIYKAANELRTHLKHKYNAMPSIEGMVSSAITPSMRRRLLRRARKGPLATDNDYGKAANSWVICHHDGIDMHMLTAPRREELNLESLWCKPEDADKFSQDSFVTSESDHIFSGIRRYHTFARAYSSATSDLESIYYKLQSQPVDAAEEELKRLQNLFEQSFSHPSIKDHGLRFQFWKTLHLARPDLVSLAQVEDALLAKYCSAESLKADMTQEKIDDITEYVKLLIDTPTRDSHKASVDLAFDRLSKIISTLYTFSNEKFSVAKNPQLVPLLWRLTYVEVKEPVIGSRDVDRFIQEQVAVATSPGPVITMASNRARDILHLIGYHTKTHPGSVPTASLRELILFTYGNAGKWDKFWQEWDNYCFEKNFTPAESVEKWTRICVYLSMRRNKAEALRFLENYWNNASSVAGSVYKSLQANGEEFNSPDERVAFKRALTNMIAMFETPEKVPFEGILSYVDQL</sequence>
<comment type="function">
    <text evidence="1">Probable mitochondrial mRNA stabilization factor.</text>
</comment>
<comment type="subcellular location">
    <subcellularLocation>
        <location evidence="1">Mitochondrion inner membrane</location>
        <topology evidence="1">Peripheral membrane protein</topology>
        <orientation evidence="1">Matrix side</orientation>
    </subcellularLocation>
</comment>
<comment type="similarity">
    <text evidence="3">Belongs to the ATP25 family.</text>
</comment>
<dbReference type="EMBL" id="CH408076">
    <property type="protein sequence ID" value="EEQ35888.1"/>
    <property type="molecule type" value="Genomic_DNA"/>
</dbReference>
<dbReference type="RefSeq" id="XP_002618852.1">
    <property type="nucleotide sequence ID" value="XM_002618806.1"/>
</dbReference>
<dbReference type="SMR" id="C4XVT2"/>
<dbReference type="STRING" id="306902.C4XVT2"/>
<dbReference type="GeneID" id="8500587"/>
<dbReference type="KEGG" id="clu:CLUG_00011"/>
<dbReference type="VEuPathDB" id="FungiDB:CLUG_00011"/>
<dbReference type="HOGENOM" id="CLU_454918_0_0_1"/>
<dbReference type="InParanoid" id="C4XVT2"/>
<dbReference type="OMA" id="WLREQMM"/>
<dbReference type="OrthoDB" id="117387at4891"/>
<dbReference type="Proteomes" id="UP000007703">
    <property type="component" value="Unassembled WGS sequence"/>
</dbReference>
<dbReference type="GO" id="GO:0005743">
    <property type="term" value="C:mitochondrial inner membrane"/>
    <property type="evidence" value="ECO:0007669"/>
    <property type="project" value="UniProtKB-SubCell"/>
</dbReference>
<dbReference type="GO" id="GO:0140053">
    <property type="term" value="P:mitochondrial gene expression"/>
    <property type="evidence" value="ECO:0007669"/>
    <property type="project" value="InterPro"/>
</dbReference>
<dbReference type="GO" id="GO:0048255">
    <property type="term" value="P:mRNA stabilization"/>
    <property type="evidence" value="ECO:0007669"/>
    <property type="project" value="TreeGrafter"/>
</dbReference>
<dbReference type="Gene3D" id="3.30.460.10">
    <property type="entry name" value="Beta Polymerase, domain 2"/>
    <property type="match status" value="1"/>
</dbReference>
<dbReference type="InterPro" id="IPR040152">
    <property type="entry name" value="Atp25"/>
</dbReference>
<dbReference type="InterPro" id="IPR043519">
    <property type="entry name" value="NT_sf"/>
</dbReference>
<dbReference type="PANTHER" id="PTHR28087">
    <property type="entry name" value="ATPASE SYNTHESIS PROTEIN 25, MITOCHONDRIAL"/>
    <property type="match status" value="1"/>
</dbReference>
<dbReference type="PANTHER" id="PTHR28087:SF1">
    <property type="entry name" value="ATPASE SYNTHESIS PROTEIN 25, MITOCHONDRIAL"/>
    <property type="match status" value="1"/>
</dbReference>
<dbReference type="Pfam" id="PF02410">
    <property type="entry name" value="RsfS"/>
    <property type="match status" value="1"/>
</dbReference>
<dbReference type="SUPFAM" id="SSF81301">
    <property type="entry name" value="Nucleotidyltransferase"/>
    <property type="match status" value="1"/>
</dbReference>
<gene>
    <name type="primary">ATP25</name>
    <name type="ORF">CLUG_00011</name>
</gene>
<evidence type="ECO:0000250" key="1"/>
<evidence type="ECO:0000255" key="2"/>
<evidence type="ECO:0000305" key="3"/>
<protein>
    <recommendedName>
        <fullName>ATPase synthesis protein 25, mitochondrial</fullName>
    </recommendedName>
</protein>